<feature type="chain" id="PRO_0000322445" description="Trigger factor">
    <location>
        <begin position="1"/>
        <end position="493"/>
    </location>
</feature>
<feature type="domain" description="PPIase FKBP-type" evidence="1">
    <location>
        <begin position="162"/>
        <end position="243"/>
    </location>
</feature>
<feature type="region of interest" description="Disordered" evidence="2">
    <location>
        <begin position="432"/>
        <end position="493"/>
    </location>
</feature>
<feature type="compositionally biased region" description="Basic and acidic residues" evidence="2">
    <location>
        <begin position="449"/>
        <end position="470"/>
    </location>
</feature>
<feature type="compositionally biased region" description="Low complexity" evidence="2">
    <location>
        <begin position="474"/>
        <end position="485"/>
    </location>
</feature>
<gene>
    <name evidence="1" type="primary">tig</name>
    <name type="ordered locus">FRAAL1909</name>
</gene>
<comment type="function">
    <text evidence="1">Involved in protein export. Acts as a chaperone by maintaining the newly synthesized protein in an open conformation. Functions as a peptidyl-prolyl cis-trans isomerase.</text>
</comment>
<comment type="catalytic activity">
    <reaction evidence="1">
        <text>[protein]-peptidylproline (omega=180) = [protein]-peptidylproline (omega=0)</text>
        <dbReference type="Rhea" id="RHEA:16237"/>
        <dbReference type="Rhea" id="RHEA-COMP:10747"/>
        <dbReference type="Rhea" id="RHEA-COMP:10748"/>
        <dbReference type="ChEBI" id="CHEBI:83833"/>
        <dbReference type="ChEBI" id="CHEBI:83834"/>
        <dbReference type="EC" id="5.2.1.8"/>
    </reaction>
</comment>
<comment type="subcellular location">
    <subcellularLocation>
        <location>Cytoplasm</location>
    </subcellularLocation>
    <text evidence="1">About half TF is bound to the ribosome near the polypeptide exit tunnel while the other half is free in the cytoplasm.</text>
</comment>
<comment type="domain">
    <text evidence="1">Consists of 3 domains; the N-terminus binds the ribosome, the middle domain has PPIase activity, while the C-terminus has intrinsic chaperone activity on its own.</text>
</comment>
<comment type="similarity">
    <text evidence="1">Belongs to the FKBP-type PPIase family. Tig subfamily.</text>
</comment>
<sequence length="493" mass="53253">MKATKETLSPTRVKLTVEVPFDELKPSLDATYRKLARQVRVSGFRPGKVPPRILDQRLGRGVILDEAVQEALPQLYSEAVQAEEVDVLSRPEVDITEFADGGQLVFTAEVDVRPEVALPEFADLSVTVDAVEVTDEQVEEQLGALRDRFAQLQPVERAVQTGDFVSLDLSAQADGKPIEGAEATGLSYEVGSGNLIEGLDEAIVGAADGESRTFTTELLAGDQAGQQAEVTATVRGVKEKELPALDDDFATTASEFDTLDDLRGDVRSRLEQSRRTEQVGQAREKLLESLLERVDVPVPDSLLAGEIEAREHRLSHELENIGTDRATYLETLGQTAEEFDAEVRETAGKAIRSQFILDAVIDAESIGIDQGELMEQVIYRAQRSGLQPDVYAQQLAQGEGLQALMADVLRTKALFLLLENAKVVDGEGNPVELALPARPAPDADEDDDHAGHDHEGHDHADHAGHDHAGDDAAAEPAEAPAATAAVDSGDRDI</sequence>
<evidence type="ECO:0000255" key="1">
    <source>
        <dbReference type="HAMAP-Rule" id="MF_00303"/>
    </source>
</evidence>
<evidence type="ECO:0000256" key="2">
    <source>
        <dbReference type="SAM" id="MobiDB-lite"/>
    </source>
</evidence>
<reference key="1">
    <citation type="journal article" date="2007" name="Genome Res.">
        <title>Genome characteristics of facultatively symbiotic Frankia sp. strains reflect host range and host plant biogeography.</title>
        <authorList>
            <person name="Normand P."/>
            <person name="Lapierre P."/>
            <person name="Tisa L.S."/>
            <person name="Gogarten J.P."/>
            <person name="Alloisio N."/>
            <person name="Bagnarol E."/>
            <person name="Bassi C.A."/>
            <person name="Berry A.M."/>
            <person name="Bickhart D.M."/>
            <person name="Choisne N."/>
            <person name="Couloux A."/>
            <person name="Cournoyer B."/>
            <person name="Cruveiller S."/>
            <person name="Daubin V."/>
            <person name="Demange N."/>
            <person name="Francino M.P."/>
            <person name="Goltsman E."/>
            <person name="Huang Y."/>
            <person name="Kopp O.R."/>
            <person name="Labarre L."/>
            <person name="Lapidus A."/>
            <person name="Lavire C."/>
            <person name="Marechal J."/>
            <person name="Martinez M."/>
            <person name="Mastronunzio J.E."/>
            <person name="Mullin B.C."/>
            <person name="Niemann J."/>
            <person name="Pujic P."/>
            <person name="Rawnsley T."/>
            <person name="Rouy Z."/>
            <person name="Schenowitz C."/>
            <person name="Sellstedt A."/>
            <person name="Tavares F."/>
            <person name="Tomkins J.P."/>
            <person name="Vallenet D."/>
            <person name="Valverde C."/>
            <person name="Wall L.G."/>
            <person name="Wang Y."/>
            <person name="Medigue C."/>
            <person name="Benson D.R."/>
        </authorList>
    </citation>
    <scope>NUCLEOTIDE SEQUENCE [LARGE SCALE GENOMIC DNA]</scope>
    <source>
        <strain>DSM 45986 / CECT 9034 / ACN14a</strain>
    </source>
</reference>
<protein>
    <recommendedName>
        <fullName evidence="1">Trigger factor</fullName>
        <shortName evidence="1">TF</shortName>
        <ecNumber evidence="1">5.2.1.8</ecNumber>
    </recommendedName>
    <alternativeName>
        <fullName evidence="1">PPIase</fullName>
    </alternativeName>
</protein>
<organism>
    <name type="scientific">Frankia alni (strain DSM 45986 / CECT 9034 / ACN14a)</name>
    <dbReference type="NCBI Taxonomy" id="326424"/>
    <lineage>
        <taxon>Bacteria</taxon>
        <taxon>Bacillati</taxon>
        <taxon>Actinomycetota</taxon>
        <taxon>Actinomycetes</taxon>
        <taxon>Frankiales</taxon>
        <taxon>Frankiaceae</taxon>
        <taxon>Frankia</taxon>
    </lineage>
</organism>
<dbReference type="EC" id="5.2.1.8" evidence="1"/>
<dbReference type="EMBL" id="CT573213">
    <property type="protein sequence ID" value="CAJ60558.1"/>
    <property type="molecule type" value="Genomic_DNA"/>
</dbReference>
<dbReference type="RefSeq" id="WP_011603084.1">
    <property type="nucleotide sequence ID" value="NC_008278.1"/>
</dbReference>
<dbReference type="SMR" id="Q0RPH4"/>
<dbReference type="STRING" id="326424.FRAAL1909"/>
<dbReference type="KEGG" id="fal:FRAAL1909"/>
<dbReference type="eggNOG" id="COG0544">
    <property type="taxonomic scope" value="Bacteria"/>
</dbReference>
<dbReference type="HOGENOM" id="CLU_033058_3_0_11"/>
<dbReference type="OrthoDB" id="9767721at2"/>
<dbReference type="Proteomes" id="UP000000657">
    <property type="component" value="Chromosome"/>
</dbReference>
<dbReference type="GO" id="GO:0005737">
    <property type="term" value="C:cytoplasm"/>
    <property type="evidence" value="ECO:0007669"/>
    <property type="project" value="UniProtKB-SubCell"/>
</dbReference>
<dbReference type="GO" id="GO:0003755">
    <property type="term" value="F:peptidyl-prolyl cis-trans isomerase activity"/>
    <property type="evidence" value="ECO:0007669"/>
    <property type="project" value="UniProtKB-UniRule"/>
</dbReference>
<dbReference type="GO" id="GO:0044183">
    <property type="term" value="F:protein folding chaperone"/>
    <property type="evidence" value="ECO:0007669"/>
    <property type="project" value="TreeGrafter"/>
</dbReference>
<dbReference type="GO" id="GO:0043022">
    <property type="term" value="F:ribosome binding"/>
    <property type="evidence" value="ECO:0007669"/>
    <property type="project" value="TreeGrafter"/>
</dbReference>
<dbReference type="GO" id="GO:0051083">
    <property type="term" value="P:'de novo' cotranslational protein folding"/>
    <property type="evidence" value="ECO:0007669"/>
    <property type="project" value="TreeGrafter"/>
</dbReference>
<dbReference type="GO" id="GO:0051301">
    <property type="term" value="P:cell division"/>
    <property type="evidence" value="ECO:0007669"/>
    <property type="project" value="UniProtKB-KW"/>
</dbReference>
<dbReference type="GO" id="GO:0061077">
    <property type="term" value="P:chaperone-mediated protein folding"/>
    <property type="evidence" value="ECO:0007669"/>
    <property type="project" value="TreeGrafter"/>
</dbReference>
<dbReference type="GO" id="GO:0015031">
    <property type="term" value="P:protein transport"/>
    <property type="evidence" value="ECO:0007669"/>
    <property type="project" value="UniProtKB-UniRule"/>
</dbReference>
<dbReference type="GO" id="GO:0043335">
    <property type="term" value="P:protein unfolding"/>
    <property type="evidence" value="ECO:0007669"/>
    <property type="project" value="TreeGrafter"/>
</dbReference>
<dbReference type="Gene3D" id="3.10.50.40">
    <property type="match status" value="1"/>
</dbReference>
<dbReference type="Gene3D" id="3.30.70.1050">
    <property type="entry name" value="Trigger factor ribosome-binding domain"/>
    <property type="match status" value="1"/>
</dbReference>
<dbReference type="Gene3D" id="1.10.3120.10">
    <property type="entry name" value="Trigger factor, C-terminal domain"/>
    <property type="match status" value="1"/>
</dbReference>
<dbReference type="HAMAP" id="MF_00303">
    <property type="entry name" value="Trigger_factor_Tig"/>
    <property type="match status" value="1"/>
</dbReference>
<dbReference type="InterPro" id="IPR046357">
    <property type="entry name" value="PPIase_dom_sf"/>
</dbReference>
<dbReference type="InterPro" id="IPR001179">
    <property type="entry name" value="PPIase_FKBP_dom"/>
</dbReference>
<dbReference type="InterPro" id="IPR005215">
    <property type="entry name" value="Trig_fac"/>
</dbReference>
<dbReference type="InterPro" id="IPR008880">
    <property type="entry name" value="Trigger_fac_C"/>
</dbReference>
<dbReference type="InterPro" id="IPR037041">
    <property type="entry name" value="Trigger_fac_C_sf"/>
</dbReference>
<dbReference type="InterPro" id="IPR008881">
    <property type="entry name" value="Trigger_fac_ribosome-bd_bac"/>
</dbReference>
<dbReference type="InterPro" id="IPR036611">
    <property type="entry name" value="Trigger_fac_ribosome-bd_sf"/>
</dbReference>
<dbReference type="InterPro" id="IPR027304">
    <property type="entry name" value="Trigger_fact/SurA_dom_sf"/>
</dbReference>
<dbReference type="NCBIfam" id="TIGR00115">
    <property type="entry name" value="tig"/>
    <property type="match status" value="1"/>
</dbReference>
<dbReference type="PANTHER" id="PTHR30560">
    <property type="entry name" value="TRIGGER FACTOR CHAPERONE AND PEPTIDYL-PROLYL CIS/TRANS ISOMERASE"/>
    <property type="match status" value="1"/>
</dbReference>
<dbReference type="PANTHER" id="PTHR30560:SF3">
    <property type="entry name" value="TRIGGER FACTOR-LIKE PROTEIN TIG, CHLOROPLASTIC"/>
    <property type="match status" value="1"/>
</dbReference>
<dbReference type="Pfam" id="PF00254">
    <property type="entry name" value="FKBP_C"/>
    <property type="match status" value="1"/>
</dbReference>
<dbReference type="Pfam" id="PF05698">
    <property type="entry name" value="Trigger_C"/>
    <property type="match status" value="1"/>
</dbReference>
<dbReference type="Pfam" id="PF05697">
    <property type="entry name" value="Trigger_N"/>
    <property type="match status" value="1"/>
</dbReference>
<dbReference type="PIRSF" id="PIRSF003095">
    <property type="entry name" value="Trigger_factor"/>
    <property type="match status" value="1"/>
</dbReference>
<dbReference type="SUPFAM" id="SSF54534">
    <property type="entry name" value="FKBP-like"/>
    <property type="match status" value="1"/>
</dbReference>
<dbReference type="SUPFAM" id="SSF109998">
    <property type="entry name" value="Triger factor/SurA peptide-binding domain-like"/>
    <property type="match status" value="1"/>
</dbReference>
<dbReference type="SUPFAM" id="SSF102735">
    <property type="entry name" value="Trigger factor ribosome-binding domain"/>
    <property type="match status" value="1"/>
</dbReference>
<dbReference type="PROSITE" id="PS50059">
    <property type="entry name" value="FKBP_PPIASE"/>
    <property type="match status" value="1"/>
</dbReference>
<proteinExistence type="inferred from homology"/>
<accession>Q0RPH4</accession>
<name>TIG_FRAAA</name>
<keyword id="KW-0131">Cell cycle</keyword>
<keyword id="KW-0132">Cell division</keyword>
<keyword id="KW-0143">Chaperone</keyword>
<keyword id="KW-0963">Cytoplasm</keyword>
<keyword id="KW-0413">Isomerase</keyword>
<keyword id="KW-1185">Reference proteome</keyword>
<keyword id="KW-0697">Rotamase</keyword>